<accession>Q8SCY7</accession>
<organismHost>
    <name type="scientific">Pseudomonas aeruginosa</name>
    <dbReference type="NCBI Taxonomy" id="287"/>
</organismHost>
<organism>
    <name type="scientific">Pseudomonas phage phiKZ</name>
    <dbReference type="NCBI Taxonomy" id="2905945"/>
    <lineage>
        <taxon>Viruses</taxon>
        <taxon>Duplodnaviria</taxon>
        <taxon>Heunggongvirae</taxon>
        <taxon>Uroviricota</taxon>
        <taxon>Caudoviricetes</taxon>
        <taxon>Phikzvirus</taxon>
        <taxon>Phikzvirus phiKZ</taxon>
    </lineage>
</organism>
<name>PRO_BPDPK</name>
<keyword id="KW-0068">Autocatalytic cleavage</keyword>
<keyword id="KW-0378">Hydrolase</keyword>
<keyword id="KW-0645">Protease</keyword>
<keyword id="KW-1185">Reference proteome</keyword>
<keyword id="KW-0720">Serine protease</keyword>
<keyword id="KW-0118">Viral capsid assembly</keyword>
<keyword id="KW-1273">Viral capsid maturation</keyword>
<keyword id="KW-1188">Viral release from host cell</keyword>
<keyword id="KW-0946">Virion</keyword>
<protein>
    <recommendedName>
        <fullName evidence="4">Capsid maturation protease</fullName>
        <ecNumber evidence="2 5">3.4.21.-</ecNumber>
    </recommendedName>
    <alternativeName>
        <fullName>Gp175</fullName>
    </alternativeName>
    <alternativeName>
        <fullName>Prohead protease</fullName>
    </alternativeName>
</protein>
<comment type="function">
    <text evidence="1 2 3">Serine protease that is responsible for cleaving many of the prohead proteins during a major morphogenetic step in viral capsid maturation (PubMed:22429790, PubMed:23740980). Cleaves the major capsid protein at 7 [A,G,S]-X-E recognition sites (PubMed:22429790, PubMed:35458430).</text>
</comment>
<comment type="subcellular location">
    <subcellularLocation>
        <location evidence="1">Virion</location>
    </subcellularLocation>
    <text evidence="1">Low-copy capsid protein.</text>
</comment>
<comment type="PTM">
    <text evidence="2">The self-cleavage of the C-terminus allows the activation of the protease.</text>
</comment>
<proteinExistence type="evidence at protein level"/>
<sequence length="270" mass="30771">MQPYSNFSGLQQRTNNQVVIGSDMLAGTNKKGVLVPDADGYYLTPLGAYGTRNSAGMFYEMASGVSMFNPDSPLMRRVKKGVLFMEYKHPEPYRKDGTRMNEHEYLMRIRQIDDDRVCAHIKELILVDSTDEKGLPIKLVLGKCKPYGPFGKYFEASITNPSQNTYCSVRSITQDDPMRGIKYTREISTWDMVGEGGIYGANKWNSPALENYEDQLMVITPDTLYQVQRERERQINMGFECSDITNVTDLAKSLGWDISPVKHRRPGFMR</sequence>
<feature type="chain" id="PRO_0000460651" description="Capsid maturation protease">
    <location>
        <begin position="1"/>
        <end position="270"/>
    </location>
</feature>
<feature type="active site" evidence="2">
    <location>
        <position position="89"/>
    </location>
</feature>
<feature type="active site" evidence="2">
    <location>
        <position position="168"/>
    </location>
</feature>
<feature type="active site" evidence="6">
    <location>
        <position position="191"/>
    </location>
</feature>
<feature type="site" description="Cleavage; by autolysis" evidence="2">
    <location>
        <position position="210"/>
    </location>
</feature>
<feature type="mutagenesis site" description="Complete loss of enzymatic activity." evidence="2">
    <original>H</original>
    <variation>A</variation>
    <location>
        <position position="89"/>
    </location>
</feature>
<feature type="mutagenesis site" description="Complete loss of enzymatic activity." evidence="2">
    <original>S</original>
    <variation>A</variation>
    <location>
        <position position="168"/>
    </location>
</feature>
<evidence type="ECO:0000269" key="1">
    <source>
    </source>
</evidence>
<evidence type="ECO:0000269" key="2">
    <source>
    </source>
</evidence>
<evidence type="ECO:0000303" key="3">
    <source>
    </source>
</evidence>
<evidence type="ECO:0000305" key="4"/>
<evidence type="ECO:0000305" key="5">
    <source>
    </source>
</evidence>
<evidence type="ECO:0000305" key="6">
    <source>
    </source>
</evidence>
<reference key="1">
    <citation type="journal article" date="2002" name="J. Mol. Biol.">
        <title>The genome of bacteriophage phiKZ of Pseudomonas aeruginosa.</title>
        <authorList>
            <person name="Mesyanzhinov V.V."/>
            <person name="Robben J."/>
            <person name="Grymonprez B."/>
            <person name="Kostyuchenko V.A."/>
            <person name="Bourkaltseva M.V."/>
            <person name="Sykilinda N.N."/>
            <person name="Krylov V.N."/>
            <person name="Volckaert G."/>
        </authorList>
    </citation>
    <scope>NUCLEOTIDE SEQUENCE [GENOMIC DNA]</scope>
</reference>
<reference key="2">
    <citation type="journal article" date="2012" name="Mol. Microbiol.">
        <title>Extensive proteolysis of head and inner body proteins by a morphogenetic protease in the giant Pseudomonas aeruginosa phage phiKZ.</title>
        <authorList>
            <person name="Thomas J.A."/>
            <person name="Weintraub S.T."/>
            <person name="Wu W."/>
            <person name="Winkler D.C."/>
            <person name="Cheng N."/>
            <person name="Steven A.C."/>
            <person name="Black L.W."/>
        </authorList>
    </citation>
    <scope>FUNCTION</scope>
    <scope>CATALYTIC ACTIVITY</scope>
    <scope>SUBCELLULAR LOCATION</scope>
</reference>
<reference key="3">
    <citation type="journal article" date="2013" name="J. Virol.">
        <title>Mutational analysis of the Pseudomonas aeruginosa myovirus KZ morphogenetic protease gp175.</title>
        <authorList>
            <person name="Thomas J.A."/>
            <person name="Black L.W."/>
        </authorList>
    </citation>
    <scope>PROTEOLYTIC CLEAVAGE</scope>
    <scope>CATALYTIC ACTIVITY</scope>
    <scope>MUTAGENESIS OF HIS-89 AND SER-168</scope>
    <scope>FUNCTION</scope>
</reference>
<reference key="4">
    <citation type="journal article" date="2022" name="Viruses">
        <title>The Beauty of Bacteriophage T4 Research: Lindsay W. Black and the T4 Head Assembly.</title>
        <authorList>
            <person name="Kuhn A."/>
            <person name="Thomas J.A."/>
        </authorList>
    </citation>
    <scope>REVIEW</scope>
</reference>
<dbReference type="EC" id="3.4.21.-" evidence="2 5"/>
<dbReference type="EMBL" id="AF399011">
    <property type="protein sequence ID" value="AAL83076.1"/>
    <property type="molecule type" value="Genomic_DNA"/>
</dbReference>
<dbReference type="RefSeq" id="NP_803741.1">
    <property type="nucleotide sequence ID" value="NC_004629.1"/>
</dbReference>
<dbReference type="MEROPS" id="S80.001"/>
<dbReference type="GeneID" id="1258220"/>
<dbReference type="KEGG" id="vg:1258220"/>
<dbReference type="Proteomes" id="UP000002098">
    <property type="component" value="Genome"/>
</dbReference>
<dbReference type="GO" id="GO:0044423">
    <property type="term" value="C:virion component"/>
    <property type="evidence" value="ECO:0007669"/>
    <property type="project" value="UniProtKB-KW"/>
</dbReference>
<dbReference type="GO" id="GO:0008236">
    <property type="term" value="F:serine-type peptidase activity"/>
    <property type="evidence" value="ECO:0007669"/>
    <property type="project" value="UniProtKB-KW"/>
</dbReference>
<dbReference type="GO" id="GO:0006508">
    <property type="term" value="P:proteolysis"/>
    <property type="evidence" value="ECO:0007669"/>
    <property type="project" value="UniProtKB-KW"/>
</dbReference>
<dbReference type="GO" id="GO:0046797">
    <property type="term" value="P:viral procapsid maturation"/>
    <property type="evidence" value="ECO:0007669"/>
    <property type="project" value="UniProtKB-KW"/>
</dbReference>
<dbReference type="GO" id="GO:0019082">
    <property type="term" value="P:viral protein processing"/>
    <property type="evidence" value="ECO:0000314"/>
    <property type="project" value="CACAO"/>
</dbReference>
<dbReference type="InterPro" id="IPR045405">
    <property type="entry name" value="Peptidase_S80"/>
</dbReference>
<dbReference type="Pfam" id="PF20034">
    <property type="entry name" value="Peptidase_S80"/>
    <property type="match status" value="1"/>
</dbReference>